<keyword id="KW-0963">Cytoplasm</keyword>
<keyword id="KW-0328">Glycosyltransferase</keyword>
<keyword id="KW-0660">Purine salvage</keyword>
<keyword id="KW-1185">Reference proteome</keyword>
<keyword id="KW-0808">Transferase</keyword>
<feature type="chain" id="PRO_0000149472" description="Adenine phosphoribosyltransferase">
    <location>
        <begin position="1"/>
        <end position="172"/>
    </location>
</feature>
<comment type="function">
    <text evidence="1">Catalyzes a salvage reaction resulting in the formation of AMP, that is energically less costly than de novo synthesis.</text>
</comment>
<comment type="catalytic activity">
    <reaction evidence="1">
        <text>AMP + diphosphate = 5-phospho-alpha-D-ribose 1-diphosphate + adenine</text>
        <dbReference type="Rhea" id="RHEA:16609"/>
        <dbReference type="ChEBI" id="CHEBI:16708"/>
        <dbReference type="ChEBI" id="CHEBI:33019"/>
        <dbReference type="ChEBI" id="CHEBI:58017"/>
        <dbReference type="ChEBI" id="CHEBI:456215"/>
        <dbReference type="EC" id="2.4.2.7"/>
    </reaction>
</comment>
<comment type="pathway">
    <text evidence="1">Purine metabolism; AMP biosynthesis via salvage pathway; AMP from adenine: step 1/1.</text>
</comment>
<comment type="subunit">
    <text evidence="1">Homodimer.</text>
</comment>
<comment type="subcellular location">
    <subcellularLocation>
        <location evidence="1">Cytoplasm</location>
    </subcellularLocation>
</comment>
<comment type="similarity">
    <text evidence="1">Belongs to the purine/pyrimidine phosphoribosyltransferase family.</text>
</comment>
<organism>
    <name type="scientific">Streptococcus thermophilus (strain ATCC BAA-250 / LMG 18311)</name>
    <dbReference type="NCBI Taxonomy" id="264199"/>
    <lineage>
        <taxon>Bacteria</taxon>
        <taxon>Bacillati</taxon>
        <taxon>Bacillota</taxon>
        <taxon>Bacilli</taxon>
        <taxon>Lactobacillales</taxon>
        <taxon>Streptococcaceae</taxon>
        <taxon>Streptococcus</taxon>
    </lineage>
</organism>
<protein>
    <recommendedName>
        <fullName evidence="1">Adenine phosphoribosyltransferase</fullName>
        <shortName evidence="1">APRT</shortName>
        <ecNumber evidence="1">2.4.2.7</ecNumber>
    </recommendedName>
</protein>
<gene>
    <name evidence="1" type="primary">apt</name>
    <name type="ordered locus">stu1223</name>
</gene>
<name>APT_STRT2</name>
<accession>Q5M3Y6</accession>
<sequence length="172" mass="18705">MKLEDYIATIENYPKEGVTFRDISPLMADGNAYSYAIREIVQYATDKKIDMIVGPEARGFIVGCPVAFELGIGFAPVRKPGKLPRKVISVDYEKEYGVDTLCMHADAIKPGQRVLIVDDLLATGGTVKATIEMIERLGGVVAGCAFLIELDGLNGREAIEGYDAKVLMNFPG</sequence>
<proteinExistence type="inferred from homology"/>
<dbReference type="EC" id="2.4.2.7" evidence="1"/>
<dbReference type="EMBL" id="CP000023">
    <property type="protein sequence ID" value="AAV60857.1"/>
    <property type="molecule type" value="Genomic_DNA"/>
</dbReference>
<dbReference type="RefSeq" id="WP_002947203.1">
    <property type="nucleotide sequence ID" value="NC_006448.1"/>
</dbReference>
<dbReference type="SMR" id="Q5M3Y6"/>
<dbReference type="STRING" id="264199.stu1223"/>
<dbReference type="KEGG" id="stl:stu1223"/>
<dbReference type="eggNOG" id="COG0503">
    <property type="taxonomic scope" value="Bacteria"/>
</dbReference>
<dbReference type="HOGENOM" id="CLU_063339_3_0_9"/>
<dbReference type="UniPathway" id="UPA00588">
    <property type="reaction ID" value="UER00646"/>
</dbReference>
<dbReference type="Proteomes" id="UP000001170">
    <property type="component" value="Chromosome"/>
</dbReference>
<dbReference type="GO" id="GO:0005737">
    <property type="term" value="C:cytoplasm"/>
    <property type="evidence" value="ECO:0007669"/>
    <property type="project" value="UniProtKB-SubCell"/>
</dbReference>
<dbReference type="GO" id="GO:0002055">
    <property type="term" value="F:adenine binding"/>
    <property type="evidence" value="ECO:0007669"/>
    <property type="project" value="TreeGrafter"/>
</dbReference>
<dbReference type="GO" id="GO:0003999">
    <property type="term" value="F:adenine phosphoribosyltransferase activity"/>
    <property type="evidence" value="ECO:0007669"/>
    <property type="project" value="UniProtKB-UniRule"/>
</dbReference>
<dbReference type="GO" id="GO:0016208">
    <property type="term" value="F:AMP binding"/>
    <property type="evidence" value="ECO:0007669"/>
    <property type="project" value="TreeGrafter"/>
</dbReference>
<dbReference type="GO" id="GO:0006168">
    <property type="term" value="P:adenine salvage"/>
    <property type="evidence" value="ECO:0007669"/>
    <property type="project" value="InterPro"/>
</dbReference>
<dbReference type="GO" id="GO:0044209">
    <property type="term" value="P:AMP salvage"/>
    <property type="evidence" value="ECO:0007669"/>
    <property type="project" value="UniProtKB-UniRule"/>
</dbReference>
<dbReference type="GO" id="GO:0006166">
    <property type="term" value="P:purine ribonucleoside salvage"/>
    <property type="evidence" value="ECO:0007669"/>
    <property type="project" value="UniProtKB-KW"/>
</dbReference>
<dbReference type="CDD" id="cd06223">
    <property type="entry name" value="PRTases_typeI"/>
    <property type="match status" value="1"/>
</dbReference>
<dbReference type="FunFam" id="3.40.50.2020:FF:000004">
    <property type="entry name" value="Adenine phosphoribosyltransferase"/>
    <property type="match status" value="1"/>
</dbReference>
<dbReference type="Gene3D" id="3.40.50.2020">
    <property type="match status" value="1"/>
</dbReference>
<dbReference type="HAMAP" id="MF_00004">
    <property type="entry name" value="Aden_phosphoribosyltr"/>
    <property type="match status" value="1"/>
</dbReference>
<dbReference type="InterPro" id="IPR005764">
    <property type="entry name" value="Ade_phspho_trans"/>
</dbReference>
<dbReference type="InterPro" id="IPR000836">
    <property type="entry name" value="PRibTrfase_dom"/>
</dbReference>
<dbReference type="InterPro" id="IPR029057">
    <property type="entry name" value="PRTase-like"/>
</dbReference>
<dbReference type="InterPro" id="IPR050054">
    <property type="entry name" value="UPRTase/APRTase"/>
</dbReference>
<dbReference type="NCBIfam" id="TIGR01090">
    <property type="entry name" value="apt"/>
    <property type="match status" value="1"/>
</dbReference>
<dbReference type="NCBIfam" id="NF002633">
    <property type="entry name" value="PRK02304.1-2"/>
    <property type="match status" value="1"/>
</dbReference>
<dbReference type="NCBIfam" id="NF002634">
    <property type="entry name" value="PRK02304.1-3"/>
    <property type="match status" value="1"/>
</dbReference>
<dbReference type="NCBIfam" id="NF002636">
    <property type="entry name" value="PRK02304.1-5"/>
    <property type="match status" value="1"/>
</dbReference>
<dbReference type="PANTHER" id="PTHR32315">
    <property type="entry name" value="ADENINE PHOSPHORIBOSYLTRANSFERASE"/>
    <property type="match status" value="1"/>
</dbReference>
<dbReference type="PANTHER" id="PTHR32315:SF3">
    <property type="entry name" value="ADENINE PHOSPHORIBOSYLTRANSFERASE"/>
    <property type="match status" value="1"/>
</dbReference>
<dbReference type="Pfam" id="PF00156">
    <property type="entry name" value="Pribosyltran"/>
    <property type="match status" value="1"/>
</dbReference>
<dbReference type="SUPFAM" id="SSF53271">
    <property type="entry name" value="PRTase-like"/>
    <property type="match status" value="1"/>
</dbReference>
<dbReference type="PROSITE" id="PS00103">
    <property type="entry name" value="PUR_PYR_PR_TRANSFER"/>
    <property type="match status" value="1"/>
</dbReference>
<reference key="1">
    <citation type="journal article" date="2004" name="Nat. Biotechnol.">
        <title>Complete sequence and comparative genome analysis of the dairy bacterium Streptococcus thermophilus.</title>
        <authorList>
            <person name="Bolotin A."/>
            <person name="Quinquis B."/>
            <person name="Renault P."/>
            <person name="Sorokin A."/>
            <person name="Ehrlich S.D."/>
            <person name="Kulakauskas S."/>
            <person name="Lapidus A."/>
            <person name="Goltsman E."/>
            <person name="Mazur M."/>
            <person name="Pusch G.D."/>
            <person name="Fonstein M."/>
            <person name="Overbeek R."/>
            <person name="Kyprides N."/>
            <person name="Purnelle B."/>
            <person name="Prozzi D."/>
            <person name="Ngui K."/>
            <person name="Masuy D."/>
            <person name="Hancy F."/>
            <person name="Burteau S."/>
            <person name="Boutry M."/>
            <person name="Delcour J."/>
            <person name="Goffeau A."/>
            <person name="Hols P."/>
        </authorList>
    </citation>
    <scope>NUCLEOTIDE SEQUENCE [LARGE SCALE GENOMIC DNA]</scope>
    <source>
        <strain>ATCC BAA-250 / LMG 18311</strain>
    </source>
</reference>
<evidence type="ECO:0000255" key="1">
    <source>
        <dbReference type="HAMAP-Rule" id="MF_00004"/>
    </source>
</evidence>